<comment type="function">
    <text evidence="1">Nucleoside triphosphate pyrophosphatase that hydrolyzes dTTP and UTP. May have a dual role in cell division arrest and in preventing the incorporation of modified nucleotides into cellular nucleic acids.</text>
</comment>
<comment type="catalytic activity">
    <reaction evidence="1">
        <text>dTTP + H2O = dTMP + diphosphate + H(+)</text>
        <dbReference type="Rhea" id="RHEA:28534"/>
        <dbReference type="ChEBI" id="CHEBI:15377"/>
        <dbReference type="ChEBI" id="CHEBI:15378"/>
        <dbReference type="ChEBI" id="CHEBI:33019"/>
        <dbReference type="ChEBI" id="CHEBI:37568"/>
        <dbReference type="ChEBI" id="CHEBI:63528"/>
        <dbReference type="EC" id="3.6.1.9"/>
    </reaction>
</comment>
<comment type="catalytic activity">
    <reaction evidence="1">
        <text>UTP + H2O = UMP + diphosphate + H(+)</text>
        <dbReference type="Rhea" id="RHEA:29395"/>
        <dbReference type="ChEBI" id="CHEBI:15377"/>
        <dbReference type="ChEBI" id="CHEBI:15378"/>
        <dbReference type="ChEBI" id="CHEBI:33019"/>
        <dbReference type="ChEBI" id="CHEBI:46398"/>
        <dbReference type="ChEBI" id="CHEBI:57865"/>
        <dbReference type="EC" id="3.6.1.9"/>
    </reaction>
</comment>
<comment type="cofactor">
    <cofactor evidence="1">
        <name>a divalent metal cation</name>
        <dbReference type="ChEBI" id="CHEBI:60240"/>
    </cofactor>
</comment>
<comment type="subcellular location">
    <subcellularLocation>
        <location evidence="1">Cytoplasm</location>
    </subcellularLocation>
</comment>
<comment type="similarity">
    <text evidence="1">Belongs to the Maf family. YhdE subfamily.</text>
</comment>
<sequence>MPSLYLASASPRRRELLTQIGVPLSVLVTAIDESPLPNEAPAAYVERLARGKAAAGLAMLEGRGEDGCVLGADTSVVIDGRILGKPVDQADGLAMLAALSGREHQVLTAVALAAAGGVEARVVECRVRFRQVAPEEALRYWQSGEPADKAGGYAIQGLGAIFVSRIEGSYSAVVGLPLCETAELLREFGIPCWQPVGGNPP</sequence>
<dbReference type="EC" id="3.6.1.9" evidence="1"/>
<dbReference type="EMBL" id="AE004091">
    <property type="protein sequence ID" value="AAG07866.1"/>
    <property type="molecule type" value="Genomic_DNA"/>
</dbReference>
<dbReference type="PIR" id="H83086">
    <property type="entry name" value="H83086"/>
</dbReference>
<dbReference type="RefSeq" id="NP_253168.1">
    <property type="nucleotide sequence ID" value="NC_002516.2"/>
</dbReference>
<dbReference type="RefSeq" id="WP_003112737.1">
    <property type="nucleotide sequence ID" value="NZ_QZGE01000004.1"/>
</dbReference>
<dbReference type="SMR" id="Q9HVU3"/>
<dbReference type="FunCoup" id="Q9HVU3">
    <property type="interactions" value="425"/>
</dbReference>
<dbReference type="STRING" id="208964.PA4478"/>
<dbReference type="PaxDb" id="208964-PA4478"/>
<dbReference type="GeneID" id="881135"/>
<dbReference type="KEGG" id="pae:PA4478"/>
<dbReference type="PATRIC" id="fig|208964.12.peg.4688"/>
<dbReference type="PseudoCAP" id="PA4478"/>
<dbReference type="HOGENOM" id="CLU_040416_2_1_6"/>
<dbReference type="InParanoid" id="Q9HVU3"/>
<dbReference type="OrthoDB" id="9807767at2"/>
<dbReference type="PhylomeDB" id="Q9HVU3"/>
<dbReference type="BioCyc" id="PAER208964:G1FZ6-4567-MONOMER"/>
<dbReference type="Proteomes" id="UP000002438">
    <property type="component" value="Chromosome"/>
</dbReference>
<dbReference type="GO" id="GO:0005737">
    <property type="term" value="C:cytoplasm"/>
    <property type="evidence" value="ECO:0007669"/>
    <property type="project" value="UniProtKB-SubCell"/>
</dbReference>
<dbReference type="GO" id="GO:0036218">
    <property type="term" value="F:dTTP diphosphatase activity"/>
    <property type="evidence" value="ECO:0007669"/>
    <property type="project" value="RHEA"/>
</dbReference>
<dbReference type="GO" id="GO:0047429">
    <property type="term" value="F:nucleoside triphosphate diphosphatase activity"/>
    <property type="evidence" value="ECO:0000318"/>
    <property type="project" value="GO_Central"/>
</dbReference>
<dbReference type="GO" id="GO:0036221">
    <property type="term" value="F:UTP diphosphatase activity"/>
    <property type="evidence" value="ECO:0007669"/>
    <property type="project" value="RHEA"/>
</dbReference>
<dbReference type="GO" id="GO:0009117">
    <property type="term" value="P:nucleotide metabolic process"/>
    <property type="evidence" value="ECO:0007669"/>
    <property type="project" value="UniProtKB-KW"/>
</dbReference>
<dbReference type="CDD" id="cd00555">
    <property type="entry name" value="Maf"/>
    <property type="match status" value="1"/>
</dbReference>
<dbReference type="Gene3D" id="3.90.950.10">
    <property type="match status" value="1"/>
</dbReference>
<dbReference type="HAMAP" id="MF_00528">
    <property type="entry name" value="Maf"/>
    <property type="match status" value="1"/>
</dbReference>
<dbReference type="InterPro" id="IPR029001">
    <property type="entry name" value="ITPase-like_fam"/>
</dbReference>
<dbReference type="InterPro" id="IPR003697">
    <property type="entry name" value="Maf-like"/>
</dbReference>
<dbReference type="NCBIfam" id="TIGR00172">
    <property type="entry name" value="maf"/>
    <property type="match status" value="1"/>
</dbReference>
<dbReference type="PANTHER" id="PTHR43213">
    <property type="entry name" value="BIFUNCTIONAL DTTP/UTP PYROPHOSPHATASE/METHYLTRANSFERASE PROTEIN-RELATED"/>
    <property type="match status" value="1"/>
</dbReference>
<dbReference type="PANTHER" id="PTHR43213:SF5">
    <property type="entry name" value="BIFUNCTIONAL DTTP_UTP PYROPHOSPHATASE_METHYLTRANSFERASE PROTEIN-RELATED"/>
    <property type="match status" value="1"/>
</dbReference>
<dbReference type="Pfam" id="PF02545">
    <property type="entry name" value="Maf"/>
    <property type="match status" value="1"/>
</dbReference>
<dbReference type="PIRSF" id="PIRSF006305">
    <property type="entry name" value="Maf"/>
    <property type="match status" value="1"/>
</dbReference>
<dbReference type="SUPFAM" id="SSF52972">
    <property type="entry name" value="ITPase-like"/>
    <property type="match status" value="1"/>
</dbReference>
<gene>
    <name type="ordered locus">PA4478</name>
</gene>
<organism>
    <name type="scientific">Pseudomonas aeruginosa (strain ATCC 15692 / DSM 22644 / CIP 104116 / JCM 14847 / LMG 12228 / 1C / PRS 101 / PAO1)</name>
    <dbReference type="NCBI Taxonomy" id="208964"/>
    <lineage>
        <taxon>Bacteria</taxon>
        <taxon>Pseudomonadati</taxon>
        <taxon>Pseudomonadota</taxon>
        <taxon>Gammaproteobacteria</taxon>
        <taxon>Pseudomonadales</taxon>
        <taxon>Pseudomonadaceae</taxon>
        <taxon>Pseudomonas</taxon>
    </lineage>
</organism>
<keyword id="KW-0963">Cytoplasm</keyword>
<keyword id="KW-0378">Hydrolase</keyword>
<keyword id="KW-0546">Nucleotide metabolism</keyword>
<keyword id="KW-1185">Reference proteome</keyword>
<evidence type="ECO:0000255" key="1">
    <source>
        <dbReference type="HAMAP-Rule" id="MF_00528"/>
    </source>
</evidence>
<protein>
    <recommendedName>
        <fullName evidence="1">dTTP/UTP pyrophosphatase</fullName>
        <shortName evidence="1">dTTPase/UTPase</shortName>
        <ecNumber evidence="1">3.6.1.9</ecNumber>
    </recommendedName>
    <alternativeName>
        <fullName evidence="1">Nucleoside triphosphate pyrophosphatase</fullName>
    </alternativeName>
    <alternativeName>
        <fullName evidence="1">Nucleotide pyrophosphatase</fullName>
        <shortName evidence="1">Nucleotide PPase</shortName>
    </alternativeName>
</protein>
<reference key="1">
    <citation type="journal article" date="2000" name="Nature">
        <title>Complete genome sequence of Pseudomonas aeruginosa PAO1, an opportunistic pathogen.</title>
        <authorList>
            <person name="Stover C.K."/>
            <person name="Pham X.-Q.T."/>
            <person name="Erwin A.L."/>
            <person name="Mizoguchi S.D."/>
            <person name="Warrener P."/>
            <person name="Hickey M.J."/>
            <person name="Brinkman F.S.L."/>
            <person name="Hufnagle W.O."/>
            <person name="Kowalik D.J."/>
            <person name="Lagrou M."/>
            <person name="Garber R.L."/>
            <person name="Goltry L."/>
            <person name="Tolentino E."/>
            <person name="Westbrock-Wadman S."/>
            <person name="Yuan Y."/>
            <person name="Brody L.L."/>
            <person name="Coulter S.N."/>
            <person name="Folger K.R."/>
            <person name="Kas A."/>
            <person name="Larbig K."/>
            <person name="Lim R.M."/>
            <person name="Smith K.A."/>
            <person name="Spencer D.H."/>
            <person name="Wong G.K.-S."/>
            <person name="Wu Z."/>
            <person name="Paulsen I.T."/>
            <person name="Reizer J."/>
            <person name="Saier M.H. Jr."/>
            <person name="Hancock R.E.W."/>
            <person name="Lory S."/>
            <person name="Olson M.V."/>
        </authorList>
    </citation>
    <scope>NUCLEOTIDE SEQUENCE [LARGE SCALE GENOMIC DNA]</scope>
    <source>
        <strain>ATCC 15692 / DSM 22644 / CIP 104116 / JCM 14847 / LMG 12228 / 1C / PRS 101 / PAO1</strain>
    </source>
</reference>
<proteinExistence type="inferred from homology"/>
<name>NTPPA_PSEAE</name>
<accession>Q9HVU3</accession>
<feature type="chain" id="PRO_0000123045" description="dTTP/UTP pyrophosphatase">
    <location>
        <begin position="1"/>
        <end position="201"/>
    </location>
</feature>
<feature type="active site" description="Proton acceptor" evidence="1">
    <location>
        <position position="73"/>
    </location>
</feature>
<feature type="site" description="Important for substrate specificity" evidence="1">
    <location>
        <position position="12"/>
    </location>
</feature>
<feature type="site" description="Important for substrate specificity" evidence="1">
    <location>
        <position position="74"/>
    </location>
</feature>
<feature type="site" description="Important for substrate specificity" evidence="1">
    <location>
        <position position="156"/>
    </location>
</feature>